<organism>
    <name type="scientific">Geobacter metallireducens (strain ATCC 53774 / DSM 7210 / GS-15)</name>
    <dbReference type="NCBI Taxonomy" id="269799"/>
    <lineage>
        <taxon>Bacteria</taxon>
        <taxon>Pseudomonadati</taxon>
        <taxon>Thermodesulfobacteriota</taxon>
        <taxon>Desulfuromonadia</taxon>
        <taxon>Geobacterales</taxon>
        <taxon>Geobacteraceae</taxon>
        <taxon>Geobacter</taxon>
    </lineage>
</organism>
<protein>
    <recommendedName>
        <fullName evidence="1">Exodeoxyribonuclease 7 large subunit</fullName>
        <ecNumber evidence="1">3.1.11.6</ecNumber>
    </recommendedName>
    <alternativeName>
        <fullName evidence="1">Exodeoxyribonuclease VII large subunit</fullName>
        <shortName evidence="1">Exonuclease VII large subunit</shortName>
    </alternativeName>
</protein>
<gene>
    <name evidence="1" type="primary">xseA</name>
    <name type="ordered locus">Gmet_1848</name>
</gene>
<feature type="chain" id="PRO_1000048773" description="Exodeoxyribonuclease 7 large subunit">
    <location>
        <begin position="1"/>
        <end position="453"/>
    </location>
</feature>
<name>EX7L_GEOMG</name>
<evidence type="ECO:0000255" key="1">
    <source>
        <dbReference type="HAMAP-Rule" id="MF_00378"/>
    </source>
</evidence>
<reference key="1">
    <citation type="journal article" date="2009" name="BMC Microbiol.">
        <title>The genome sequence of Geobacter metallireducens: features of metabolism, physiology and regulation common and dissimilar to Geobacter sulfurreducens.</title>
        <authorList>
            <person name="Aklujkar M."/>
            <person name="Krushkal J."/>
            <person name="DiBartolo G."/>
            <person name="Lapidus A."/>
            <person name="Land M.L."/>
            <person name="Lovley D.R."/>
        </authorList>
    </citation>
    <scope>NUCLEOTIDE SEQUENCE [LARGE SCALE GENOMIC DNA]</scope>
    <source>
        <strain>ATCC 53774 / DSM 7210 / GS-15</strain>
    </source>
</reference>
<keyword id="KW-0963">Cytoplasm</keyword>
<keyword id="KW-0269">Exonuclease</keyword>
<keyword id="KW-0378">Hydrolase</keyword>
<keyword id="KW-0540">Nuclease</keyword>
<keyword id="KW-1185">Reference proteome</keyword>
<proteinExistence type="inferred from homology"/>
<comment type="function">
    <text evidence="1">Bidirectionally degrades single-stranded DNA into large acid-insoluble oligonucleotides, which are then degraded further into small acid-soluble oligonucleotides.</text>
</comment>
<comment type="catalytic activity">
    <reaction evidence="1">
        <text>Exonucleolytic cleavage in either 5'- to 3'- or 3'- to 5'-direction to yield nucleoside 5'-phosphates.</text>
        <dbReference type="EC" id="3.1.11.6"/>
    </reaction>
</comment>
<comment type="subunit">
    <text evidence="1">Heterooligomer composed of large and small subunits.</text>
</comment>
<comment type="subcellular location">
    <subcellularLocation>
        <location evidence="1">Cytoplasm</location>
    </subcellularLocation>
</comment>
<comment type="similarity">
    <text evidence="1">Belongs to the XseA family.</text>
</comment>
<dbReference type="EC" id="3.1.11.6" evidence="1"/>
<dbReference type="EMBL" id="CP000148">
    <property type="protein sequence ID" value="ABB32077.1"/>
    <property type="molecule type" value="Genomic_DNA"/>
</dbReference>
<dbReference type="RefSeq" id="WP_004511998.1">
    <property type="nucleotide sequence ID" value="NC_007517.1"/>
</dbReference>
<dbReference type="SMR" id="Q39UJ7"/>
<dbReference type="STRING" id="269799.Gmet_1848"/>
<dbReference type="KEGG" id="gme:Gmet_1848"/>
<dbReference type="eggNOG" id="COG1570">
    <property type="taxonomic scope" value="Bacteria"/>
</dbReference>
<dbReference type="HOGENOM" id="CLU_023625_3_1_7"/>
<dbReference type="Proteomes" id="UP000007073">
    <property type="component" value="Chromosome"/>
</dbReference>
<dbReference type="GO" id="GO:0005737">
    <property type="term" value="C:cytoplasm"/>
    <property type="evidence" value="ECO:0007669"/>
    <property type="project" value="UniProtKB-SubCell"/>
</dbReference>
<dbReference type="GO" id="GO:0009318">
    <property type="term" value="C:exodeoxyribonuclease VII complex"/>
    <property type="evidence" value="ECO:0007669"/>
    <property type="project" value="InterPro"/>
</dbReference>
<dbReference type="GO" id="GO:0008855">
    <property type="term" value="F:exodeoxyribonuclease VII activity"/>
    <property type="evidence" value="ECO:0007669"/>
    <property type="project" value="UniProtKB-UniRule"/>
</dbReference>
<dbReference type="GO" id="GO:0003676">
    <property type="term" value="F:nucleic acid binding"/>
    <property type="evidence" value="ECO:0007669"/>
    <property type="project" value="InterPro"/>
</dbReference>
<dbReference type="GO" id="GO:0006308">
    <property type="term" value="P:DNA catabolic process"/>
    <property type="evidence" value="ECO:0007669"/>
    <property type="project" value="UniProtKB-UniRule"/>
</dbReference>
<dbReference type="CDD" id="cd04489">
    <property type="entry name" value="ExoVII_LU_OBF"/>
    <property type="match status" value="1"/>
</dbReference>
<dbReference type="HAMAP" id="MF_00378">
    <property type="entry name" value="Exonuc_7_L"/>
    <property type="match status" value="1"/>
</dbReference>
<dbReference type="InterPro" id="IPR003753">
    <property type="entry name" value="Exonuc_VII_L"/>
</dbReference>
<dbReference type="InterPro" id="IPR020579">
    <property type="entry name" value="Exonuc_VII_lsu_C"/>
</dbReference>
<dbReference type="InterPro" id="IPR025824">
    <property type="entry name" value="OB-fold_nuc-bd_dom"/>
</dbReference>
<dbReference type="NCBIfam" id="TIGR00237">
    <property type="entry name" value="xseA"/>
    <property type="match status" value="1"/>
</dbReference>
<dbReference type="PANTHER" id="PTHR30008">
    <property type="entry name" value="EXODEOXYRIBONUCLEASE 7 LARGE SUBUNIT"/>
    <property type="match status" value="1"/>
</dbReference>
<dbReference type="PANTHER" id="PTHR30008:SF0">
    <property type="entry name" value="EXODEOXYRIBONUCLEASE 7 LARGE SUBUNIT"/>
    <property type="match status" value="1"/>
</dbReference>
<dbReference type="Pfam" id="PF02601">
    <property type="entry name" value="Exonuc_VII_L"/>
    <property type="match status" value="1"/>
</dbReference>
<dbReference type="Pfam" id="PF13742">
    <property type="entry name" value="tRNA_anti_2"/>
    <property type="match status" value="1"/>
</dbReference>
<sequence length="453" mass="50756">MELFPEKRILTVSQLTSLIRGVLEENFEHVWVEGEVSNLAMPASGHLYFTLKDAGAQIRCVMFRASARALKFRPRDGMGLIVRGRITVYEQRGDYQFLVEYLEPRGVGALQLAFIQLKEKLAKEGLFAEEHKRPIPSLPQRIGVVTSATGAAIHDILNVLNRRFANVEVLIRPVKVQGEGAADEIAEAIIDFNRYGAVDVMIVGRGGGSLEDLWAFNEEKVARAVHRSRIPIISAVGHEIDFTIADFVADLRAPTPSAAAELVVKSKEELASKVEFLRHRLIQTLRRILADAGGELESLSRALRDPTVLLGHLSQRLDDIFVRLERAIAGDLKDRGRMLEALKNHLRLRNPALKVERARERVIALSDKSEIALLRHVDRYREAAAVHSARLETLSPLGTLARGYSVALKLPERVPVKTFRQLALKDRLELLFHHGRAWCRVESLDEDASCSHE</sequence>
<accession>Q39UJ7</accession>